<reference evidence="3" key="1">
    <citation type="submission" date="2005-05" db="EMBL/GenBank/DDBJ databases">
        <authorList>
            <consortium name="NIH - Zebrafish Gene Collection (ZGC) project"/>
        </authorList>
    </citation>
    <scope>NUCLEOTIDE SEQUENCE [LARGE SCALE MRNA]</scope>
    <source>
        <tissue evidence="3">Brain</tissue>
    </source>
</reference>
<protein>
    <recommendedName>
        <fullName>LIM domain only protein 3</fullName>
        <shortName>LMO-3</shortName>
    </recommendedName>
</protein>
<sequence length="145" mass="16608">MLSVQPDTKPKGCAGCNRKIKDRYLLKALDKYWHEDCLKCACCDCRLGEVGSTLYTKANLILCRRDYLRLFGVTGNCAACSKLIPAFEMVMRAKENVYHLDCFACQLCNQRFCVGDKFFLKNNMILCQTDYEEGLMKEGYAPQVR</sequence>
<dbReference type="EMBL" id="BC095186">
    <property type="protein sequence ID" value="AAH95186.1"/>
    <property type="molecule type" value="mRNA"/>
</dbReference>
<dbReference type="RefSeq" id="NP_001018575.1">
    <property type="nucleotide sequence ID" value="NM_001020739.2"/>
</dbReference>
<dbReference type="RefSeq" id="XP_005164690.1">
    <property type="nucleotide sequence ID" value="XM_005164633.5"/>
</dbReference>
<dbReference type="SMR" id="Q503U0"/>
<dbReference type="FunCoup" id="Q503U0">
    <property type="interactions" value="394"/>
</dbReference>
<dbReference type="STRING" id="7955.ENSDARP00000098627"/>
<dbReference type="PaxDb" id="7955-ENSDARP00000098627"/>
<dbReference type="Ensembl" id="ENSDART00000003583">
    <property type="protein sequence ID" value="ENSDARP00000015268"/>
    <property type="gene ID" value="ENSDARG00000008720"/>
</dbReference>
<dbReference type="Ensembl" id="ENSDART00000181201">
    <property type="protein sequence ID" value="ENSDARP00000152478"/>
    <property type="gene ID" value="ENSDARG00000008720"/>
</dbReference>
<dbReference type="GeneID" id="553774"/>
<dbReference type="KEGG" id="dre:553774"/>
<dbReference type="AGR" id="ZFIN:ZDB-GENE-050522-201"/>
<dbReference type="CTD" id="55885"/>
<dbReference type="ZFIN" id="ZDB-GENE-050522-201">
    <property type="gene designation" value="lmo3"/>
</dbReference>
<dbReference type="eggNOG" id="KOG0490">
    <property type="taxonomic scope" value="Eukaryota"/>
</dbReference>
<dbReference type="HOGENOM" id="CLU_001357_7_1_1"/>
<dbReference type="InParanoid" id="Q503U0"/>
<dbReference type="OrthoDB" id="6352355at2759"/>
<dbReference type="PhylomeDB" id="Q503U0"/>
<dbReference type="PRO" id="PR:Q503U0"/>
<dbReference type="Proteomes" id="UP000000437">
    <property type="component" value="Alternate scaffold 4"/>
</dbReference>
<dbReference type="Proteomes" id="UP000000437">
    <property type="component" value="Chromosome 4"/>
</dbReference>
<dbReference type="Bgee" id="ENSDARG00000008720">
    <property type="expression patterns" value="Expressed in brain and 10 other cell types or tissues"/>
</dbReference>
<dbReference type="ExpressionAtlas" id="Q503U0">
    <property type="expression patterns" value="baseline"/>
</dbReference>
<dbReference type="GO" id="GO:0005634">
    <property type="term" value="C:nucleus"/>
    <property type="evidence" value="ECO:0000318"/>
    <property type="project" value="GO_Central"/>
</dbReference>
<dbReference type="GO" id="GO:0140297">
    <property type="term" value="F:DNA-binding transcription factor binding"/>
    <property type="evidence" value="ECO:0000318"/>
    <property type="project" value="GO_Central"/>
</dbReference>
<dbReference type="GO" id="GO:0046872">
    <property type="term" value="F:metal ion binding"/>
    <property type="evidence" value="ECO:0007669"/>
    <property type="project" value="UniProtKB-KW"/>
</dbReference>
<dbReference type="GO" id="GO:0003713">
    <property type="term" value="F:transcription coactivator activity"/>
    <property type="evidence" value="ECO:0000318"/>
    <property type="project" value="GO_Central"/>
</dbReference>
<dbReference type="GO" id="GO:0045944">
    <property type="term" value="P:positive regulation of transcription by RNA polymerase II"/>
    <property type="evidence" value="ECO:0000318"/>
    <property type="project" value="GO_Central"/>
</dbReference>
<dbReference type="CDD" id="cd09388">
    <property type="entry name" value="LIM1_LMO1_LMO3"/>
    <property type="match status" value="1"/>
</dbReference>
<dbReference type="FunFam" id="2.10.110.10:FF:000015">
    <property type="entry name" value="LIM domain only 3"/>
    <property type="match status" value="1"/>
</dbReference>
<dbReference type="FunFam" id="2.10.110.10:FF:000016">
    <property type="entry name" value="LIM domain only 3"/>
    <property type="match status" value="1"/>
</dbReference>
<dbReference type="Gene3D" id="2.10.110.10">
    <property type="entry name" value="Cysteine Rich Protein"/>
    <property type="match status" value="2"/>
</dbReference>
<dbReference type="InterPro" id="IPR050945">
    <property type="entry name" value="LMO_RBTN_TF"/>
</dbReference>
<dbReference type="InterPro" id="IPR001781">
    <property type="entry name" value="Znf_LIM"/>
</dbReference>
<dbReference type="PANTHER" id="PTHR45787">
    <property type="entry name" value="LD11652P"/>
    <property type="match status" value="1"/>
</dbReference>
<dbReference type="PANTHER" id="PTHR45787:SF7">
    <property type="entry name" value="LIM DOMAIN ONLY PROTEIN 3"/>
    <property type="match status" value="1"/>
</dbReference>
<dbReference type="Pfam" id="PF00412">
    <property type="entry name" value="LIM"/>
    <property type="match status" value="2"/>
</dbReference>
<dbReference type="SMART" id="SM00132">
    <property type="entry name" value="LIM"/>
    <property type="match status" value="2"/>
</dbReference>
<dbReference type="SUPFAM" id="SSF57716">
    <property type="entry name" value="Glucocorticoid receptor-like (DNA-binding domain)"/>
    <property type="match status" value="3"/>
</dbReference>
<dbReference type="PROSITE" id="PS00478">
    <property type="entry name" value="LIM_DOMAIN_1"/>
    <property type="match status" value="2"/>
</dbReference>
<dbReference type="PROSITE" id="PS50023">
    <property type="entry name" value="LIM_DOMAIN_2"/>
    <property type="match status" value="2"/>
</dbReference>
<proteinExistence type="evidence at transcript level"/>
<accession>Q503U0</accession>
<name>LMO3_DANRE</name>
<evidence type="ECO:0000250" key="1">
    <source>
        <dbReference type="UniProtKB" id="Q8TAP4"/>
    </source>
</evidence>
<evidence type="ECO:0000255" key="2">
    <source>
        <dbReference type="PROSITE-ProRule" id="PRU00125"/>
    </source>
</evidence>
<evidence type="ECO:0000312" key="3">
    <source>
        <dbReference type="EMBL" id="AAH95186.1"/>
    </source>
</evidence>
<feature type="chain" id="PRO_0000318078" description="LIM domain only protein 3">
    <location>
        <begin position="1"/>
        <end position="145"/>
    </location>
</feature>
<feature type="domain" description="LIM zinc-binding 1" evidence="2">
    <location>
        <begin position="11"/>
        <end position="73"/>
    </location>
</feature>
<feature type="domain" description="LIM zinc-binding 2" evidence="2">
    <location>
        <begin position="75"/>
        <end position="137"/>
    </location>
</feature>
<organism>
    <name type="scientific">Danio rerio</name>
    <name type="common">Zebrafish</name>
    <name type="synonym">Brachydanio rerio</name>
    <dbReference type="NCBI Taxonomy" id="7955"/>
    <lineage>
        <taxon>Eukaryota</taxon>
        <taxon>Metazoa</taxon>
        <taxon>Chordata</taxon>
        <taxon>Craniata</taxon>
        <taxon>Vertebrata</taxon>
        <taxon>Euteleostomi</taxon>
        <taxon>Actinopterygii</taxon>
        <taxon>Neopterygii</taxon>
        <taxon>Teleostei</taxon>
        <taxon>Ostariophysi</taxon>
        <taxon>Cypriniformes</taxon>
        <taxon>Danionidae</taxon>
        <taxon>Danioninae</taxon>
        <taxon>Danio</taxon>
    </lineage>
</organism>
<keyword id="KW-0440">LIM domain</keyword>
<keyword id="KW-0479">Metal-binding</keyword>
<keyword id="KW-1185">Reference proteome</keyword>
<keyword id="KW-0677">Repeat</keyword>
<keyword id="KW-0862">Zinc</keyword>
<gene>
    <name evidence="1" type="primary">lmo3</name>
    <name type="ORF">zgc:110149</name>
</gene>